<accession>A6TR67</accession>
<protein>
    <recommendedName>
        <fullName evidence="1">Segregation and condensation protein B</fullName>
    </recommendedName>
</protein>
<feature type="chain" id="PRO_1000069946" description="Segregation and condensation protein B">
    <location>
        <begin position="1"/>
        <end position="190"/>
    </location>
</feature>
<sequence length="190" mass="22018">MDKNYIKAAIEAILFAWSDPISSSELSNILDIKVTETKEIMKEMIDEFNFHKRGIQIIQMNDHYQMSTRAEYHEILQKLFEPKQNKGLTQASLETLAIIAYRQPITKTEIESVRGVKCDKAISTLFEKNLIEDRGRLEKTGRPILFGTTLHFLKNFGLKSLEDLPKITEIDQANEEELIKDIYNQQLKGR</sequence>
<keyword id="KW-0131">Cell cycle</keyword>
<keyword id="KW-0132">Cell division</keyword>
<keyword id="KW-0159">Chromosome partition</keyword>
<keyword id="KW-0963">Cytoplasm</keyword>
<keyword id="KW-1185">Reference proteome</keyword>
<evidence type="ECO:0000255" key="1">
    <source>
        <dbReference type="HAMAP-Rule" id="MF_01804"/>
    </source>
</evidence>
<comment type="function">
    <text evidence="1">Participates in chromosomal partition during cell division. May act via the formation of a condensin-like complex containing Smc and ScpA that pull DNA away from mid-cell into both cell halves.</text>
</comment>
<comment type="subunit">
    <text evidence="1">Homodimer. Homodimerization may be required to stabilize the binding of ScpA to the Smc head domains. Component of a cohesin-like complex composed of ScpA, ScpB and the Smc homodimer, in which ScpA and ScpB bind to the head domain of Smc. The presence of the three proteins is required for the association of the complex with DNA.</text>
</comment>
<comment type="subcellular location">
    <subcellularLocation>
        <location evidence="1">Cytoplasm</location>
    </subcellularLocation>
    <text evidence="1">Associated with two foci at the outer edges of the nucleoid region in young cells, and at four foci within both cell halves in older cells.</text>
</comment>
<comment type="similarity">
    <text evidence="1">Belongs to the ScpB family.</text>
</comment>
<proteinExistence type="inferred from homology"/>
<reference key="1">
    <citation type="journal article" date="2016" name="Genome Announc.">
        <title>Complete genome sequence of Alkaliphilus metalliredigens strain QYMF, an alkaliphilic and metal-reducing bacterium isolated from borax-contaminated leachate ponds.</title>
        <authorList>
            <person name="Hwang C."/>
            <person name="Copeland A."/>
            <person name="Lucas S."/>
            <person name="Lapidus A."/>
            <person name="Barry K."/>
            <person name="Detter J.C."/>
            <person name="Glavina Del Rio T."/>
            <person name="Hammon N."/>
            <person name="Israni S."/>
            <person name="Dalin E."/>
            <person name="Tice H."/>
            <person name="Pitluck S."/>
            <person name="Chertkov O."/>
            <person name="Brettin T."/>
            <person name="Bruce D."/>
            <person name="Han C."/>
            <person name="Schmutz J."/>
            <person name="Larimer F."/>
            <person name="Land M.L."/>
            <person name="Hauser L."/>
            <person name="Kyrpides N."/>
            <person name="Mikhailova N."/>
            <person name="Ye Q."/>
            <person name="Zhou J."/>
            <person name="Richardson P."/>
            <person name="Fields M.W."/>
        </authorList>
    </citation>
    <scope>NUCLEOTIDE SEQUENCE [LARGE SCALE GENOMIC DNA]</scope>
    <source>
        <strain>QYMF</strain>
    </source>
</reference>
<gene>
    <name evidence="1" type="primary">scpB</name>
    <name type="ordered locus">Amet_2532</name>
</gene>
<organism>
    <name type="scientific">Alkaliphilus metalliredigens (strain QYMF)</name>
    <dbReference type="NCBI Taxonomy" id="293826"/>
    <lineage>
        <taxon>Bacteria</taxon>
        <taxon>Bacillati</taxon>
        <taxon>Bacillota</taxon>
        <taxon>Clostridia</taxon>
        <taxon>Peptostreptococcales</taxon>
        <taxon>Natronincolaceae</taxon>
        <taxon>Alkaliphilus</taxon>
    </lineage>
</organism>
<dbReference type="EMBL" id="CP000724">
    <property type="protein sequence ID" value="ABR48685.1"/>
    <property type="molecule type" value="Genomic_DNA"/>
</dbReference>
<dbReference type="RefSeq" id="WP_012063660.1">
    <property type="nucleotide sequence ID" value="NC_009633.1"/>
</dbReference>
<dbReference type="SMR" id="A6TR67"/>
<dbReference type="STRING" id="293826.Amet_2532"/>
<dbReference type="KEGG" id="amt:Amet_2532"/>
<dbReference type="eggNOG" id="COG1386">
    <property type="taxonomic scope" value="Bacteria"/>
</dbReference>
<dbReference type="HOGENOM" id="CLU_045647_5_3_9"/>
<dbReference type="OrthoDB" id="9806226at2"/>
<dbReference type="Proteomes" id="UP000001572">
    <property type="component" value="Chromosome"/>
</dbReference>
<dbReference type="GO" id="GO:0005737">
    <property type="term" value="C:cytoplasm"/>
    <property type="evidence" value="ECO:0007669"/>
    <property type="project" value="UniProtKB-SubCell"/>
</dbReference>
<dbReference type="GO" id="GO:0051301">
    <property type="term" value="P:cell division"/>
    <property type="evidence" value="ECO:0007669"/>
    <property type="project" value="UniProtKB-KW"/>
</dbReference>
<dbReference type="GO" id="GO:0051304">
    <property type="term" value="P:chromosome separation"/>
    <property type="evidence" value="ECO:0007669"/>
    <property type="project" value="InterPro"/>
</dbReference>
<dbReference type="GO" id="GO:0006260">
    <property type="term" value="P:DNA replication"/>
    <property type="evidence" value="ECO:0007669"/>
    <property type="project" value="UniProtKB-UniRule"/>
</dbReference>
<dbReference type="Gene3D" id="1.10.10.10">
    <property type="entry name" value="Winged helix-like DNA-binding domain superfamily/Winged helix DNA-binding domain"/>
    <property type="match status" value="2"/>
</dbReference>
<dbReference type="HAMAP" id="MF_01804">
    <property type="entry name" value="ScpB"/>
    <property type="match status" value="1"/>
</dbReference>
<dbReference type="InterPro" id="IPR005234">
    <property type="entry name" value="ScpB_csome_segregation"/>
</dbReference>
<dbReference type="InterPro" id="IPR036388">
    <property type="entry name" value="WH-like_DNA-bd_sf"/>
</dbReference>
<dbReference type="InterPro" id="IPR036390">
    <property type="entry name" value="WH_DNA-bd_sf"/>
</dbReference>
<dbReference type="NCBIfam" id="TIGR00281">
    <property type="entry name" value="SMC-Scp complex subunit ScpB"/>
    <property type="match status" value="1"/>
</dbReference>
<dbReference type="PANTHER" id="PTHR34298">
    <property type="entry name" value="SEGREGATION AND CONDENSATION PROTEIN B"/>
    <property type="match status" value="1"/>
</dbReference>
<dbReference type="PANTHER" id="PTHR34298:SF2">
    <property type="entry name" value="SEGREGATION AND CONDENSATION PROTEIN B"/>
    <property type="match status" value="1"/>
</dbReference>
<dbReference type="Pfam" id="PF04079">
    <property type="entry name" value="SMC_ScpB"/>
    <property type="match status" value="1"/>
</dbReference>
<dbReference type="PIRSF" id="PIRSF019345">
    <property type="entry name" value="ScpB"/>
    <property type="match status" value="1"/>
</dbReference>
<dbReference type="SUPFAM" id="SSF46785">
    <property type="entry name" value="Winged helix' DNA-binding domain"/>
    <property type="match status" value="2"/>
</dbReference>
<name>SCPB_ALKMQ</name>